<accession>Q8DBG0</accession>
<feature type="chain" id="PRO_0000161231" description="Elongation factor Ts">
    <location>
        <begin position="1"/>
        <end position="280"/>
    </location>
</feature>
<feature type="region of interest" description="Involved in Mg(2+) ion dislocation from EF-Tu" evidence="1">
    <location>
        <begin position="79"/>
        <end position="82"/>
    </location>
</feature>
<name>EFTS_VIBVU</name>
<reference key="1">
    <citation type="submission" date="2002-12" db="EMBL/GenBank/DDBJ databases">
        <title>Complete genome sequence of Vibrio vulnificus CMCP6.</title>
        <authorList>
            <person name="Rhee J.H."/>
            <person name="Kim S.Y."/>
            <person name="Chung S.S."/>
            <person name="Kim J.J."/>
            <person name="Moon Y.H."/>
            <person name="Jeong H."/>
            <person name="Choy H.E."/>
        </authorList>
    </citation>
    <scope>NUCLEOTIDE SEQUENCE [LARGE SCALE GENOMIC DNA]</scope>
    <source>
        <strain>CMCP6</strain>
    </source>
</reference>
<evidence type="ECO:0000255" key="1">
    <source>
        <dbReference type="HAMAP-Rule" id="MF_00050"/>
    </source>
</evidence>
<dbReference type="EMBL" id="AE016795">
    <property type="protein sequence ID" value="AAO10263.1"/>
    <property type="molecule type" value="Genomic_DNA"/>
</dbReference>
<dbReference type="RefSeq" id="WP_011079763.1">
    <property type="nucleotide sequence ID" value="NC_004459.3"/>
</dbReference>
<dbReference type="SMR" id="Q8DBG0"/>
<dbReference type="GeneID" id="93896088"/>
<dbReference type="KEGG" id="vvu:VV1_1860"/>
<dbReference type="HOGENOM" id="CLU_047155_0_2_6"/>
<dbReference type="Proteomes" id="UP000002275">
    <property type="component" value="Chromosome 1"/>
</dbReference>
<dbReference type="GO" id="GO:0005737">
    <property type="term" value="C:cytoplasm"/>
    <property type="evidence" value="ECO:0007669"/>
    <property type="project" value="UniProtKB-SubCell"/>
</dbReference>
<dbReference type="GO" id="GO:0003746">
    <property type="term" value="F:translation elongation factor activity"/>
    <property type="evidence" value="ECO:0007669"/>
    <property type="project" value="UniProtKB-UniRule"/>
</dbReference>
<dbReference type="CDD" id="cd14275">
    <property type="entry name" value="UBA_EF-Ts"/>
    <property type="match status" value="1"/>
</dbReference>
<dbReference type="FunFam" id="1.10.286.20:FF:000001">
    <property type="entry name" value="Elongation factor Ts"/>
    <property type="match status" value="1"/>
</dbReference>
<dbReference type="FunFam" id="1.10.8.10:FF:000001">
    <property type="entry name" value="Elongation factor Ts"/>
    <property type="match status" value="1"/>
</dbReference>
<dbReference type="FunFam" id="3.30.479.20:FF:000001">
    <property type="entry name" value="Elongation factor Ts"/>
    <property type="match status" value="1"/>
</dbReference>
<dbReference type="Gene3D" id="1.10.286.20">
    <property type="match status" value="1"/>
</dbReference>
<dbReference type="Gene3D" id="1.10.8.10">
    <property type="entry name" value="DNA helicase RuvA subunit, C-terminal domain"/>
    <property type="match status" value="1"/>
</dbReference>
<dbReference type="Gene3D" id="3.30.479.20">
    <property type="entry name" value="Elongation factor Ts, dimerisation domain"/>
    <property type="match status" value="2"/>
</dbReference>
<dbReference type="HAMAP" id="MF_00050">
    <property type="entry name" value="EF_Ts"/>
    <property type="match status" value="1"/>
</dbReference>
<dbReference type="InterPro" id="IPR036402">
    <property type="entry name" value="EF-Ts_dimer_sf"/>
</dbReference>
<dbReference type="InterPro" id="IPR001816">
    <property type="entry name" value="Transl_elong_EFTs/EF1B"/>
</dbReference>
<dbReference type="InterPro" id="IPR014039">
    <property type="entry name" value="Transl_elong_EFTs/EF1B_dimer"/>
</dbReference>
<dbReference type="InterPro" id="IPR018101">
    <property type="entry name" value="Transl_elong_Ts_CS"/>
</dbReference>
<dbReference type="InterPro" id="IPR009060">
    <property type="entry name" value="UBA-like_sf"/>
</dbReference>
<dbReference type="NCBIfam" id="TIGR00116">
    <property type="entry name" value="tsf"/>
    <property type="match status" value="1"/>
</dbReference>
<dbReference type="PANTHER" id="PTHR11741">
    <property type="entry name" value="ELONGATION FACTOR TS"/>
    <property type="match status" value="1"/>
</dbReference>
<dbReference type="PANTHER" id="PTHR11741:SF0">
    <property type="entry name" value="ELONGATION FACTOR TS, MITOCHONDRIAL"/>
    <property type="match status" value="1"/>
</dbReference>
<dbReference type="Pfam" id="PF00889">
    <property type="entry name" value="EF_TS"/>
    <property type="match status" value="1"/>
</dbReference>
<dbReference type="SUPFAM" id="SSF54713">
    <property type="entry name" value="Elongation factor Ts (EF-Ts), dimerisation domain"/>
    <property type="match status" value="2"/>
</dbReference>
<dbReference type="SUPFAM" id="SSF46934">
    <property type="entry name" value="UBA-like"/>
    <property type="match status" value="1"/>
</dbReference>
<dbReference type="PROSITE" id="PS01126">
    <property type="entry name" value="EF_TS_1"/>
    <property type="match status" value="1"/>
</dbReference>
<dbReference type="PROSITE" id="PS01127">
    <property type="entry name" value="EF_TS_2"/>
    <property type="match status" value="1"/>
</dbReference>
<sequence length="280" mass="29942">MAVTAALVKELRERTGAGMMECKKALVETNGDVELAIENMRKSGAAKAAKKAGNVAAEGAIFIKEENGVAVLLEVNCQTDFVAKDGNFTAFAGKVAAEALASKASIEELQAKFEEERVALVAKIGENINIRRVQFVEGTALASYRHGEKIGVVVAGEGDAETLKHIAMHVAASRPEYVNPEDVPADVVAKEREVQVEIAMNEGKPKEIAEKMVEGRMKKFTGEVSLTGQPFVMEPKKSVAEILKERGASVVTFVRLEVGEGIEKAEGLSFAEEVALAQKG</sequence>
<keyword id="KW-0963">Cytoplasm</keyword>
<keyword id="KW-0251">Elongation factor</keyword>
<keyword id="KW-0648">Protein biosynthesis</keyword>
<organism>
    <name type="scientific">Vibrio vulnificus (strain CMCP6)</name>
    <dbReference type="NCBI Taxonomy" id="216895"/>
    <lineage>
        <taxon>Bacteria</taxon>
        <taxon>Pseudomonadati</taxon>
        <taxon>Pseudomonadota</taxon>
        <taxon>Gammaproteobacteria</taxon>
        <taxon>Vibrionales</taxon>
        <taxon>Vibrionaceae</taxon>
        <taxon>Vibrio</taxon>
    </lineage>
</organism>
<protein>
    <recommendedName>
        <fullName evidence="1">Elongation factor Ts</fullName>
        <shortName evidence="1">EF-Ts</shortName>
    </recommendedName>
</protein>
<comment type="function">
    <text evidence="1">Associates with the EF-Tu.GDP complex and induces the exchange of GDP to GTP. It remains bound to the aminoacyl-tRNA.EF-Tu.GTP complex up to the GTP hydrolysis stage on the ribosome.</text>
</comment>
<comment type="subcellular location">
    <subcellularLocation>
        <location evidence="1">Cytoplasm</location>
    </subcellularLocation>
</comment>
<comment type="similarity">
    <text evidence="1">Belongs to the EF-Ts family.</text>
</comment>
<proteinExistence type="inferred from homology"/>
<gene>
    <name evidence="1" type="primary">tsf</name>
    <name type="ordered locus">VV1_1860</name>
</gene>